<accession>Q8R9N0</accession>
<comment type="function">
    <text evidence="1">The alpha subunit is responsible for the aldol cleavage of indoleglycerol phosphate to indole and glyceraldehyde 3-phosphate.</text>
</comment>
<comment type="catalytic activity">
    <reaction evidence="1">
        <text>(1S,2R)-1-C-(indol-3-yl)glycerol 3-phosphate + L-serine = D-glyceraldehyde 3-phosphate + L-tryptophan + H2O</text>
        <dbReference type="Rhea" id="RHEA:10532"/>
        <dbReference type="ChEBI" id="CHEBI:15377"/>
        <dbReference type="ChEBI" id="CHEBI:33384"/>
        <dbReference type="ChEBI" id="CHEBI:57912"/>
        <dbReference type="ChEBI" id="CHEBI:58866"/>
        <dbReference type="ChEBI" id="CHEBI:59776"/>
        <dbReference type="EC" id="4.2.1.20"/>
    </reaction>
</comment>
<comment type="pathway">
    <text evidence="1">Amino-acid biosynthesis; L-tryptophan biosynthesis; L-tryptophan from chorismate: step 5/5.</text>
</comment>
<comment type="subunit">
    <text evidence="1">Tetramer of two alpha and two beta chains.</text>
</comment>
<comment type="similarity">
    <text evidence="1">Belongs to the TrpA family.</text>
</comment>
<feature type="chain" id="PRO_0000098867" description="Tryptophan synthase alpha chain">
    <location>
        <begin position="1"/>
        <end position="262"/>
    </location>
</feature>
<feature type="active site" description="Proton acceptor" evidence="1">
    <location>
        <position position="49"/>
    </location>
</feature>
<feature type="active site" description="Proton acceptor" evidence="1">
    <location>
        <position position="60"/>
    </location>
</feature>
<name>TRPA_CALS4</name>
<dbReference type="EC" id="4.2.1.20" evidence="1"/>
<dbReference type="EMBL" id="AE008691">
    <property type="protein sequence ID" value="AAM24781.1"/>
    <property type="molecule type" value="Genomic_DNA"/>
</dbReference>
<dbReference type="RefSeq" id="WP_011025814.1">
    <property type="nucleotide sequence ID" value="NC_003869.1"/>
</dbReference>
<dbReference type="SMR" id="Q8R9N0"/>
<dbReference type="STRING" id="273068.TTE1577"/>
<dbReference type="KEGG" id="tte:TTE1577"/>
<dbReference type="eggNOG" id="COG0159">
    <property type="taxonomic scope" value="Bacteria"/>
</dbReference>
<dbReference type="HOGENOM" id="CLU_016734_0_0_9"/>
<dbReference type="OrthoDB" id="9804578at2"/>
<dbReference type="UniPathway" id="UPA00035">
    <property type="reaction ID" value="UER00044"/>
</dbReference>
<dbReference type="Proteomes" id="UP000000555">
    <property type="component" value="Chromosome"/>
</dbReference>
<dbReference type="GO" id="GO:0005829">
    <property type="term" value="C:cytosol"/>
    <property type="evidence" value="ECO:0007669"/>
    <property type="project" value="TreeGrafter"/>
</dbReference>
<dbReference type="GO" id="GO:0004834">
    <property type="term" value="F:tryptophan synthase activity"/>
    <property type="evidence" value="ECO:0007669"/>
    <property type="project" value="UniProtKB-UniRule"/>
</dbReference>
<dbReference type="CDD" id="cd04724">
    <property type="entry name" value="Tryptophan_synthase_alpha"/>
    <property type="match status" value="1"/>
</dbReference>
<dbReference type="FunFam" id="3.20.20.70:FF:000037">
    <property type="entry name" value="Tryptophan synthase alpha chain"/>
    <property type="match status" value="1"/>
</dbReference>
<dbReference type="Gene3D" id="3.20.20.70">
    <property type="entry name" value="Aldolase class I"/>
    <property type="match status" value="1"/>
</dbReference>
<dbReference type="HAMAP" id="MF_00131">
    <property type="entry name" value="Trp_synth_alpha"/>
    <property type="match status" value="1"/>
</dbReference>
<dbReference type="InterPro" id="IPR013785">
    <property type="entry name" value="Aldolase_TIM"/>
</dbReference>
<dbReference type="InterPro" id="IPR011060">
    <property type="entry name" value="RibuloseP-bd_barrel"/>
</dbReference>
<dbReference type="InterPro" id="IPR018204">
    <property type="entry name" value="Trp_synthase_alpha_AS"/>
</dbReference>
<dbReference type="InterPro" id="IPR002028">
    <property type="entry name" value="Trp_synthase_suA"/>
</dbReference>
<dbReference type="NCBIfam" id="TIGR00262">
    <property type="entry name" value="trpA"/>
    <property type="match status" value="1"/>
</dbReference>
<dbReference type="PANTHER" id="PTHR43406:SF1">
    <property type="entry name" value="TRYPTOPHAN SYNTHASE ALPHA CHAIN, CHLOROPLASTIC"/>
    <property type="match status" value="1"/>
</dbReference>
<dbReference type="PANTHER" id="PTHR43406">
    <property type="entry name" value="TRYPTOPHAN SYNTHASE, ALPHA CHAIN"/>
    <property type="match status" value="1"/>
</dbReference>
<dbReference type="Pfam" id="PF00290">
    <property type="entry name" value="Trp_syntA"/>
    <property type="match status" value="1"/>
</dbReference>
<dbReference type="SUPFAM" id="SSF51366">
    <property type="entry name" value="Ribulose-phoshate binding barrel"/>
    <property type="match status" value="1"/>
</dbReference>
<dbReference type="PROSITE" id="PS00167">
    <property type="entry name" value="TRP_SYNTHASE_ALPHA"/>
    <property type="match status" value="1"/>
</dbReference>
<protein>
    <recommendedName>
        <fullName evidence="1">Tryptophan synthase alpha chain</fullName>
        <ecNumber evidence="1">4.2.1.20</ecNumber>
    </recommendedName>
</protein>
<sequence>MNRIDRRFDDLKKEGKKALITFITAGDPDIDTTYDIVLALEEAGADIIELGIPYSDPLADGPTIQASSQRALAKGIKIKDIMDLVMRIREKSDIPIVYLVYYNSVFKYGIEKFLEDSKNAGVDGLIIPDLPLEERKEVLDVADKYEIYLIPLVAPTSKERIKGITENGKGFVYCVTLTGVTGAREEITTDLEEYMRLVSSYTSMPKALGFGISGPEMARKLKSLSDGIVVGSAIVERIAKGYNRCEMLKEVKEFVLSLREVL</sequence>
<evidence type="ECO:0000255" key="1">
    <source>
        <dbReference type="HAMAP-Rule" id="MF_00131"/>
    </source>
</evidence>
<proteinExistence type="inferred from homology"/>
<keyword id="KW-0028">Amino-acid biosynthesis</keyword>
<keyword id="KW-0057">Aromatic amino acid biosynthesis</keyword>
<keyword id="KW-0456">Lyase</keyword>
<keyword id="KW-1185">Reference proteome</keyword>
<keyword id="KW-0822">Tryptophan biosynthesis</keyword>
<gene>
    <name evidence="1" type="primary">trpA</name>
    <name type="ordered locus">TTE1577</name>
</gene>
<reference key="1">
    <citation type="journal article" date="2002" name="Genome Res.">
        <title>A complete sequence of the T. tengcongensis genome.</title>
        <authorList>
            <person name="Bao Q."/>
            <person name="Tian Y."/>
            <person name="Li W."/>
            <person name="Xu Z."/>
            <person name="Xuan Z."/>
            <person name="Hu S."/>
            <person name="Dong W."/>
            <person name="Yang J."/>
            <person name="Chen Y."/>
            <person name="Xue Y."/>
            <person name="Xu Y."/>
            <person name="Lai X."/>
            <person name="Huang L."/>
            <person name="Dong X."/>
            <person name="Ma Y."/>
            <person name="Ling L."/>
            <person name="Tan H."/>
            <person name="Chen R."/>
            <person name="Wang J."/>
            <person name="Yu J."/>
            <person name="Yang H."/>
        </authorList>
    </citation>
    <scope>NUCLEOTIDE SEQUENCE [LARGE SCALE GENOMIC DNA]</scope>
    <source>
        <strain>DSM 15242 / JCM 11007 / NBRC 100824 / MB4</strain>
    </source>
</reference>
<organism>
    <name type="scientific">Caldanaerobacter subterraneus subsp. tengcongensis (strain DSM 15242 / JCM 11007 / NBRC 100824 / MB4)</name>
    <name type="common">Thermoanaerobacter tengcongensis</name>
    <dbReference type="NCBI Taxonomy" id="273068"/>
    <lineage>
        <taxon>Bacteria</taxon>
        <taxon>Bacillati</taxon>
        <taxon>Bacillota</taxon>
        <taxon>Clostridia</taxon>
        <taxon>Thermoanaerobacterales</taxon>
        <taxon>Thermoanaerobacteraceae</taxon>
        <taxon>Caldanaerobacter</taxon>
    </lineage>
</organism>